<reference key="1">
    <citation type="journal article" date="2000" name="DNA Res.">
        <title>Structural analysis of Arabidopsis thaliana chromosome 3. I. Sequence features of the regions of 4,504,864 bp covered by sixty P1 and TAC clones.</title>
        <authorList>
            <person name="Sato S."/>
            <person name="Nakamura Y."/>
            <person name="Kaneko T."/>
            <person name="Katoh T."/>
            <person name="Asamizu E."/>
            <person name="Tabata S."/>
        </authorList>
    </citation>
    <scope>NUCLEOTIDE SEQUENCE [LARGE SCALE GENOMIC DNA]</scope>
    <source>
        <strain>cv. Columbia</strain>
    </source>
</reference>
<reference key="2">
    <citation type="journal article" date="2017" name="Plant J.">
        <title>Araport11: a complete reannotation of the Arabidopsis thaliana reference genome.</title>
        <authorList>
            <person name="Cheng C.Y."/>
            <person name="Krishnakumar V."/>
            <person name="Chan A.P."/>
            <person name="Thibaud-Nissen F."/>
            <person name="Schobel S."/>
            <person name="Town C.D."/>
        </authorList>
    </citation>
    <scope>GENOME REANNOTATION</scope>
    <source>
        <strain>cv. Columbia</strain>
    </source>
</reference>
<reference key="3">
    <citation type="journal article" date="2001" name="Plant Physiol.">
        <title>A superfamily of proteins with novel cysteine-rich repeats.</title>
        <authorList>
            <person name="Chen Z."/>
        </authorList>
    </citation>
    <scope>GENE FAMILY ORGANIZATION</scope>
    <scope>NOMENCLATURE</scope>
</reference>
<organism>
    <name type="scientific">Arabidopsis thaliana</name>
    <name type="common">Mouse-ear cress</name>
    <dbReference type="NCBI Taxonomy" id="3702"/>
    <lineage>
        <taxon>Eukaryota</taxon>
        <taxon>Viridiplantae</taxon>
        <taxon>Streptophyta</taxon>
        <taxon>Embryophyta</taxon>
        <taxon>Tracheophyta</taxon>
        <taxon>Spermatophyta</taxon>
        <taxon>Magnoliopsida</taxon>
        <taxon>eudicotyledons</taxon>
        <taxon>Gunneridae</taxon>
        <taxon>Pentapetalae</taxon>
        <taxon>rosids</taxon>
        <taxon>malvids</taxon>
        <taxon>Brassicales</taxon>
        <taxon>Brassicaceae</taxon>
        <taxon>Camelineae</taxon>
        <taxon>Arabidopsis</taxon>
    </lineage>
</organism>
<protein>
    <recommendedName>
        <fullName>Putative cysteine-rich repeat secretory protein 36</fullName>
    </recommendedName>
</protein>
<keyword id="KW-1185">Reference proteome</keyword>
<keyword id="KW-0677">Repeat</keyword>
<keyword id="KW-0964">Secreted</keyword>
<keyword id="KW-0732">Signal</keyword>
<feature type="signal peptide" evidence="1">
    <location>
        <begin position="1"/>
        <end position="28"/>
    </location>
</feature>
<feature type="chain" id="PRO_0000296164" description="Putative cysteine-rich repeat secretory protein 36">
    <location>
        <begin position="29"/>
        <end position="251"/>
    </location>
</feature>
<feature type="domain" description="Gnk2-homologous 1" evidence="2">
    <location>
        <begin position="35"/>
        <end position="139"/>
    </location>
</feature>
<feature type="domain" description="Gnk2-homologous 2" evidence="2">
    <location>
        <begin position="144"/>
        <end position="248"/>
    </location>
</feature>
<name>CRR36_ARATH</name>
<comment type="subcellular location">
    <subcellularLocation>
        <location evidence="3">Secreted</location>
    </subcellularLocation>
</comment>
<comment type="similarity">
    <text evidence="3">Belongs to the cysteine-rich repeat secretory protein family.</text>
</comment>
<comment type="caution">
    <text evidence="3">Could be the product of a pseudogene.</text>
</comment>
<comment type="sequence caution" evidence="3">
    <conflict type="erroneous gene model prediction">
        <sequence resource="EMBL-CDS" id="AEE76583"/>
    </conflict>
</comment>
<comment type="sequence caution" evidence="3">
    <conflict type="erroneous gene model prediction">
        <sequence resource="EMBL-CDS" id="BAB01389"/>
    </conflict>
</comment>
<comment type="sequence caution" evidence="3">
    <conflict type="frameshift">
        <sequence resource="EMBL-CDS" id="BAB01389"/>
    </conflict>
</comment>
<proteinExistence type="uncertain"/>
<dbReference type="EMBL" id="AB028622">
    <property type="protein sequence ID" value="BAB01389.1"/>
    <property type="status" value="ALT_SEQ"/>
    <property type="molecule type" value="Genomic_DNA"/>
</dbReference>
<dbReference type="EMBL" id="CP002686">
    <property type="protein sequence ID" value="AEE76583.1"/>
    <property type="status" value="ALT_SEQ"/>
    <property type="molecule type" value="Genomic_DNA"/>
</dbReference>
<dbReference type="RefSeq" id="NP_001154636.1">
    <property type="nucleotide sequence ID" value="NM_001161164.1"/>
</dbReference>
<dbReference type="SMR" id="Q9LRK1"/>
<dbReference type="GeneID" id="3768889"/>
<dbReference type="KEGG" id="ath:AT3G22053"/>
<dbReference type="Araport" id="AT3G22053"/>
<dbReference type="TAIR" id="AT3G22053"/>
<dbReference type="InParanoid" id="Q9LRK1"/>
<dbReference type="Proteomes" id="UP000006548">
    <property type="component" value="Chromosome 3"/>
</dbReference>
<dbReference type="ExpressionAtlas" id="Q9LRK1">
    <property type="expression patterns" value="baseline and differential"/>
</dbReference>
<dbReference type="GO" id="GO:0005576">
    <property type="term" value="C:extracellular region"/>
    <property type="evidence" value="ECO:0007669"/>
    <property type="project" value="UniProtKB-SubCell"/>
</dbReference>
<dbReference type="CDD" id="cd23509">
    <property type="entry name" value="Gnk2-like"/>
    <property type="match status" value="2"/>
</dbReference>
<dbReference type="Gene3D" id="3.30.430.20">
    <property type="entry name" value="Gnk2 domain, C-X8-C-X2-C motif"/>
    <property type="match status" value="2"/>
</dbReference>
<dbReference type="InterPro" id="IPR050581">
    <property type="entry name" value="CRR_secretory_protein"/>
</dbReference>
<dbReference type="InterPro" id="IPR002902">
    <property type="entry name" value="GNK2"/>
</dbReference>
<dbReference type="InterPro" id="IPR038408">
    <property type="entry name" value="GNK2_sf"/>
</dbReference>
<dbReference type="PANTHER" id="PTHR32411:SF54">
    <property type="entry name" value="CYSTEINE-RICH REPEAT SECRETORY PROTEIN 29-RELATED"/>
    <property type="match status" value="1"/>
</dbReference>
<dbReference type="PANTHER" id="PTHR32411">
    <property type="entry name" value="CYSTEINE-RICH REPEAT SECRETORY PROTEIN 38-RELATED"/>
    <property type="match status" value="1"/>
</dbReference>
<dbReference type="Pfam" id="PF01657">
    <property type="entry name" value="Stress-antifung"/>
    <property type="match status" value="2"/>
</dbReference>
<dbReference type="PROSITE" id="PS51473">
    <property type="entry name" value="GNK2"/>
    <property type="match status" value="2"/>
</dbReference>
<gene>
    <name type="primary">CRRSP36</name>
    <name type="ordered locus">At3g22053</name>
    <name type="ORF">MZN24.24</name>
</gene>
<accession>Q9LRK1</accession>
<accession>F4IYY1</accession>
<sequence>MHSSYSLSKCLVCFTILAIQTLIRRVSSLNRTNAYLNHKCLVIQGKYKRQSEYEENLNYIIDHISSTQKFPDGFTHTSRGEAPNFVTIVFQCRGDSYGSKCRSCYATPISGIRRRCQGYKGAIIWDQCFLDISTINSPPTMIDYENTFSMHNQNNVNEDAESFNKKTRDFLYNLMLKADKPKAGSYAAGEMRLGTKNLYAMVQCALDIFECKVCLEWSINELSKCCHSKKGARFLGTSCNIRYELYPFLST</sequence>
<evidence type="ECO:0000255" key="1"/>
<evidence type="ECO:0000255" key="2">
    <source>
        <dbReference type="PROSITE-ProRule" id="PRU00806"/>
    </source>
</evidence>
<evidence type="ECO:0000305" key="3"/>